<comment type="function">
    <text evidence="1">Cell wall formation. Adds enolpyruvyl to UDP-N-acetylglucosamine.</text>
</comment>
<comment type="catalytic activity">
    <reaction evidence="1">
        <text>phosphoenolpyruvate + UDP-N-acetyl-alpha-D-glucosamine = UDP-N-acetyl-3-O-(1-carboxyvinyl)-alpha-D-glucosamine + phosphate</text>
        <dbReference type="Rhea" id="RHEA:18681"/>
        <dbReference type="ChEBI" id="CHEBI:43474"/>
        <dbReference type="ChEBI" id="CHEBI:57705"/>
        <dbReference type="ChEBI" id="CHEBI:58702"/>
        <dbReference type="ChEBI" id="CHEBI:68483"/>
        <dbReference type="EC" id="2.5.1.7"/>
    </reaction>
</comment>
<comment type="pathway">
    <text evidence="1">Cell wall biogenesis; peptidoglycan biosynthesis.</text>
</comment>
<comment type="subcellular location">
    <subcellularLocation>
        <location evidence="1">Cytoplasm</location>
    </subcellularLocation>
</comment>
<comment type="similarity">
    <text evidence="1">Belongs to the EPSP synthase family. MurA subfamily.</text>
</comment>
<accession>A5G8T5</accession>
<name>MURA_GEOUR</name>
<organism>
    <name type="scientific">Geotalea uraniireducens (strain Rf4)</name>
    <name type="common">Geobacter uraniireducens</name>
    <dbReference type="NCBI Taxonomy" id="351605"/>
    <lineage>
        <taxon>Bacteria</taxon>
        <taxon>Pseudomonadati</taxon>
        <taxon>Thermodesulfobacteriota</taxon>
        <taxon>Desulfuromonadia</taxon>
        <taxon>Geobacterales</taxon>
        <taxon>Geobacteraceae</taxon>
        <taxon>Geotalea</taxon>
    </lineage>
</organism>
<dbReference type="EC" id="2.5.1.7" evidence="1"/>
<dbReference type="EMBL" id="CP000698">
    <property type="protein sequence ID" value="ABQ28203.1"/>
    <property type="molecule type" value="Genomic_DNA"/>
</dbReference>
<dbReference type="RefSeq" id="WP_011940840.1">
    <property type="nucleotide sequence ID" value="NC_009483.1"/>
</dbReference>
<dbReference type="SMR" id="A5G8T5"/>
<dbReference type="STRING" id="351605.Gura_4059"/>
<dbReference type="KEGG" id="gur:Gura_4059"/>
<dbReference type="HOGENOM" id="CLU_027387_0_0_7"/>
<dbReference type="OrthoDB" id="9803760at2"/>
<dbReference type="UniPathway" id="UPA00219"/>
<dbReference type="Proteomes" id="UP000006695">
    <property type="component" value="Chromosome"/>
</dbReference>
<dbReference type="GO" id="GO:0005737">
    <property type="term" value="C:cytoplasm"/>
    <property type="evidence" value="ECO:0007669"/>
    <property type="project" value="UniProtKB-SubCell"/>
</dbReference>
<dbReference type="GO" id="GO:0008760">
    <property type="term" value="F:UDP-N-acetylglucosamine 1-carboxyvinyltransferase activity"/>
    <property type="evidence" value="ECO:0007669"/>
    <property type="project" value="UniProtKB-UniRule"/>
</dbReference>
<dbReference type="GO" id="GO:0051301">
    <property type="term" value="P:cell division"/>
    <property type="evidence" value="ECO:0007669"/>
    <property type="project" value="UniProtKB-KW"/>
</dbReference>
<dbReference type="GO" id="GO:0071555">
    <property type="term" value="P:cell wall organization"/>
    <property type="evidence" value="ECO:0007669"/>
    <property type="project" value="UniProtKB-KW"/>
</dbReference>
<dbReference type="GO" id="GO:0009252">
    <property type="term" value="P:peptidoglycan biosynthetic process"/>
    <property type="evidence" value="ECO:0007669"/>
    <property type="project" value="UniProtKB-UniRule"/>
</dbReference>
<dbReference type="GO" id="GO:0008360">
    <property type="term" value="P:regulation of cell shape"/>
    <property type="evidence" value="ECO:0007669"/>
    <property type="project" value="UniProtKB-KW"/>
</dbReference>
<dbReference type="GO" id="GO:0019277">
    <property type="term" value="P:UDP-N-acetylgalactosamine biosynthetic process"/>
    <property type="evidence" value="ECO:0007669"/>
    <property type="project" value="InterPro"/>
</dbReference>
<dbReference type="CDD" id="cd01555">
    <property type="entry name" value="UdpNAET"/>
    <property type="match status" value="1"/>
</dbReference>
<dbReference type="FunFam" id="3.65.10.10:FF:000001">
    <property type="entry name" value="UDP-N-acetylglucosamine 1-carboxyvinyltransferase"/>
    <property type="match status" value="1"/>
</dbReference>
<dbReference type="Gene3D" id="3.65.10.10">
    <property type="entry name" value="Enolpyruvate transferase domain"/>
    <property type="match status" value="2"/>
</dbReference>
<dbReference type="HAMAP" id="MF_00111">
    <property type="entry name" value="MurA"/>
    <property type="match status" value="1"/>
</dbReference>
<dbReference type="InterPro" id="IPR001986">
    <property type="entry name" value="Enolpyruvate_Tfrase_dom"/>
</dbReference>
<dbReference type="InterPro" id="IPR036968">
    <property type="entry name" value="Enolpyruvate_Tfrase_sf"/>
</dbReference>
<dbReference type="InterPro" id="IPR050068">
    <property type="entry name" value="MurA_subfamily"/>
</dbReference>
<dbReference type="InterPro" id="IPR013792">
    <property type="entry name" value="RNA3'P_cycl/enolpyr_Trfase_a/b"/>
</dbReference>
<dbReference type="InterPro" id="IPR005750">
    <property type="entry name" value="UDP_GlcNAc_COvinyl_MurA"/>
</dbReference>
<dbReference type="NCBIfam" id="TIGR01072">
    <property type="entry name" value="murA"/>
    <property type="match status" value="1"/>
</dbReference>
<dbReference type="NCBIfam" id="NF006873">
    <property type="entry name" value="PRK09369.1"/>
    <property type="match status" value="1"/>
</dbReference>
<dbReference type="PANTHER" id="PTHR43783">
    <property type="entry name" value="UDP-N-ACETYLGLUCOSAMINE 1-CARBOXYVINYLTRANSFERASE"/>
    <property type="match status" value="1"/>
</dbReference>
<dbReference type="PANTHER" id="PTHR43783:SF1">
    <property type="entry name" value="UDP-N-ACETYLGLUCOSAMINE 1-CARBOXYVINYLTRANSFERASE"/>
    <property type="match status" value="1"/>
</dbReference>
<dbReference type="Pfam" id="PF00275">
    <property type="entry name" value="EPSP_synthase"/>
    <property type="match status" value="1"/>
</dbReference>
<dbReference type="SUPFAM" id="SSF55205">
    <property type="entry name" value="EPT/RTPC-like"/>
    <property type="match status" value="1"/>
</dbReference>
<protein>
    <recommendedName>
        <fullName evidence="1">UDP-N-acetylglucosamine 1-carboxyvinyltransferase</fullName>
        <ecNumber evidence="1">2.5.1.7</ecNumber>
    </recommendedName>
    <alternativeName>
        <fullName evidence="1">Enoylpyruvate transferase</fullName>
    </alternativeName>
    <alternativeName>
        <fullName evidence="1">UDP-N-acetylglucosamine enolpyruvyl transferase</fullName>
        <shortName evidence="1">EPT</shortName>
    </alternativeName>
</protein>
<proteinExistence type="inferred from homology"/>
<sequence length="417" mass="44465">MDKLIIKGGKKLAGEVTVSGSKNASLPIFISTILAPAEHEISNVPFLRDINTTIKVLEQLGAKVDGNGNIVKIDTTGVDNFEATYELVKTMRASVLVLGPLLARFGKARVSLPGGCAIGARPINLHLKGLAAMGADINLTHGYVEAKAKQLKGARINFDVSTVGGTEHLMMAAATAKGETILENAAREPEIVDLANVLTKMGARIDGAGTDTIRISGVKELGPVSHRVMPDRIEAGTFMIAAAITGGDIKVRNMQLEHLDALVFKLQDAGVEIINKDNVVRVKGPRKIKGVNIKTRPYPGFPTDMQAQFMALMCLADSASVISENIFENRFMHVSELMRFGADITTEGNTATVKGVKKLSGAPVMATDLRASACLILAGLAADNTTEVSRIYHLDRGYESIEKKLAGLGADIVRVQE</sequence>
<evidence type="ECO:0000255" key="1">
    <source>
        <dbReference type="HAMAP-Rule" id="MF_00111"/>
    </source>
</evidence>
<gene>
    <name evidence="1" type="primary">murA</name>
    <name type="ordered locus">Gura_4059</name>
</gene>
<keyword id="KW-0131">Cell cycle</keyword>
<keyword id="KW-0132">Cell division</keyword>
<keyword id="KW-0133">Cell shape</keyword>
<keyword id="KW-0961">Cell wall biogenesis/degradation</keyword>
<keyword id="KW-0963">Cytoplasm</keyword>
<keyword id="KW-0573">Peptidoglycan synthesis</keyword>
<keyword id="KW-0670">Pyruvate</keyword>
<keyword id="KW-1185">Reference proteome</keyword>
<keyword id="KW-0808">Transferase</keyword>
<reference key="1">
    <citation type="submission" date="2007-05" db="EMBL/GenBank/DDBJ databases">
        <title>Complete sequence of Geobacter uraniireducens Rf4.</title>
        <authorList>
            <consortium name="US DOE Joint Genome Institute"/>
            <person name="Copeland A."/>
            <person name="Lucas S."/>
            <person name="Lapidus A."/>
            <person name="Barry K."/>
            <person name="Detter J.C."/>
            <person name="Glavina del Rio T."/>
            <person name="Hammon N."/>
            <person name="Israni S."/>
            <person name="Dalin E."/>
            <person name="Tice H."/>
            <person name="Pitluck S."/>
            <person name="Chertkov O."/>
            <person name="Brettin T."/>
            <person name="Bruce D."/>
            <person name="Han C."/>
            <person name="Schmutz J."/>
            <person name="Larimer F."/>
            <person name="Land M."/>
            <person name="Hauser L."/>
            <person name="Kyrpides N."/>
            <person name="Mikhailova N."/>
            <person name="Shelobolina E."/>
            <person name="Aklujkar M."/>
            <person name="Lovley D."/>
            <person name="Richardson P."/>
        </authorList>
    </citation>
    <scope>NUCLEOTIDE SEQUENCE [LARGE SCALE GENOMIC DNA]</scope>
    <source>
        <strain>ATCC BAA-1134 / JCM 13001 / Rf4</strain>
    </source>
</reference>
<feature type="chain" id="PRO_1000075971" description="UDP-N-acetylglucosamine 1-carboxyvinyltransferase">
    <location>
        <begin position="1"/>
        <end position="417"/>
    </location>
</feature>
<feature type="active site" description="Proton donor" evidence="1">
    <location>
        <position position="116"/>
    </location>
</feature>
<feature type="binding site" evidence="1">
    <location>
        <begin position="22"/>
        <end position="23"/>
    </location>
    <ligand>
        <name>phosphoenolpyruvate</name>
        <dbReference type="ChEBI" id="CHEBI:58702"/>
    </ligand>
</feature>
<feature type="binding site" evidence="1">
    <location>
        <position position="92"/>
    </location>
    <ligand>
        <name>UDP-N-acetyl-alpha-D-glucosamine</name>
        <dbReference type="ChEBI" id="CHEBI:57705"/>
    </ligand>
</feature>
<feature type="binding site" evidence="1">
    <location>
        <position position="304"/>
    </location>
    <ligand>
        <name>UDP-N-acetyl-alpha-D-glucosamine</name>
        <dbReference type="ChEBI" id="CHEBI:57705"/>
    </ligand>
</feature>
<feature type="binding site" evidence="1">
    <location>
        <position position="326"/>
    </location>
    <ligand>
        <name>UDP-N-acetyl-alpha-D-glucosamine</name>
        <dbReference type="ChEBI" id="CHEBI:57705"/>
    </ligand>
</feature>
<feature type="modified residue" description="2-(S-cysteinyl)pyruvic acid O-phosphothioketal" evidence="1">
    <location>
        <position position="116"/>
    </location>
</feature>